<accession>O34320</accession>
<accession>C0H407</accession>
<accession>Q796K6</accession>
<name>FADG_BACSU</name>
<feature type="chain" id="PRO_0000360506" description="Uncharacterized protein FadG">
    <location>
        <begin position="1"/>
        <end position="576"/>
    </location>
</feature>
<sequence length="576" mass="64006">MDEMVLLTQEWLNETYKGKSGYNSIEENGKTGWKTMYALTRALQLELGITQTSDSFGPTTLRKLKELGPISTSTNSKKNIVKIIQGALYCKGYGPGGLTGTFGQGTKEAIAEMQLHMGLSKTDGVVTPKVFKALLNMDSYILLNGASEKVRSIQQWLNNKYYNRENFYFMPCDGLYSRDTQKSLVYAIQYEEGLSDSIANGNFGPTTQRLIPVLRIGETDEKNSFIHLFQAALIFNGYNVPFDGVYSESVRSKVKAFQSFAKLQQSGTADFQTWASLLVSTGDPNRKGVACDSITQITSDRAESLKRAGYKIVGRYLTNAPGSTLNKKIQPGELETILKSGLNVFPIYQTYGGATNYFNKEQGKKDAFAAYKAAKEYGFKNNTVIYFAVDYDAYGNDLNNNIIPHFEGINEIMNGFLGSTYKIGIYAPRNVCTIVSKKGLAFASFVSGMSTGFSGNLGYPLPYNWAFDQISTITVGNGSGMIEIDNDICSGLDNGVNTINIVPSENKKFFDQIDVLYETAEKYAQMQSDLNNGVKKTQLANELVAQYLRKDDYKGWKWVPTAGQIDPIYREWAVKR</sequence>
<comment type="induction">
    <text evidence="1">Repressed by FadR in the absence of LCFAs (fatty acids of 14-20 carbon atoms). When LCFAs are present in the medium, they are converted to long-chain acyl-CoAs, which antagonize FadR as to its binding to fadR boxes on target DNA and thus derepress transcription.</text>
</comment>
<comment type="similarity">
    <text evidence="2">Belongs to the FadG family.</text>
</comment>
<comment type="sequence caution" evidence="2">
    <conflict type="erroneous termination">
        <sequence resource="EMBL-CDS" id="CAA10870"/>
    </conflict>
    <text>Extended C-terminus.</text>
</comment>
<evidence type="ECO:0000269" key="1">
    <source>
    </source>
</evidence>
<evidence type="ECO:0000305" key="2"/>
<gene>
    <name type="primary">fadG</name>
    <name type="synonym">ykuG</name>
    <name type="ordered locus">BSU14071</name>
    <name type="ORF">BSU14070</name>
</gene>
<reference key="1">
    <citation type="submission" date="1997-11" db="EMBL/GenBank/DDBJ databases">
        <title>Sequence of the Bacillus subtilis chromosome from ykuA to cse-15.</title>
        <authorList>
            <person name="Scanlan E."/>
            <person name="Devine K.M."/>
        </authorList>
    </citation>
    <scope>NUCLEOTIDE SEQUENCE [GENOMIC DNA]</scope>
    <source>
        <strain>168</strain>
    </source>
</reference>
<reference key="2">
    <citation type="journal article" date="1997" name="Nature">
        <title>The complete genome sequence of the Gram-positive bacterium Bacillus subtilis.</title>
        <authorList>
            <person name="Kunst F."/>
            <person name="Ogasawara N."/>
            <person name="Moszer I."/>
            <person name="Albertini A.M."/>
            <person name="Alloni G."/>
            <person name="Azevedo V."/>
            <person name="Bertero M.G."/>
            <person name="Bessieres P."/>
            <person name="Bolotin A."/>
            <person name="Borchert S."/>
            <person name="Borriss R."/>
            <person name="Boursier L."/>
            <person name="Brans A."/>
            <person name="Braun M."/>
            <person name="Brignell S.C."/>
            <person name="Bron S."/>
            <person name="Brouillet S."/>
            <person name="Bruschi C.V."/>
            <person name="Caldwell B."/>
            <person name="Capuano V."/>
            <person name="Carter N.M."/>
            <person name="Choi S.-K."/>
            <person name="Codani J.-J."/>
            <person name="Connerton I.F."/>
            <person name="Cummings N.J."/>
            <person name="Daniel R.A."/>
            <person name="Denizot F."/>
            <person name="Devine K.M."/>
            <person name="Duesterhoeft A."/>
            <person name="Ehrlich S.D."/>
            <person name="Emmerson P.T."/>
            <person name="Entian K.-D."/>
            <person name="Errington J."/>
            <person name="Fabret C."/>
            <person name="Ferrari E."/>
            <person name="Foulger D."/>
            <person name="Fritz C."/>
            <person name="Fujita M."/>
            <person name="Fujita Y."/>
            <person name="Fuma S."/>
            <person name="Galizzi A."/>
            <person name="Galleron N."/>
            <person name="Ghim S.-Y."/>
            <person name="Glaser P."/>
            <person name="Goffeau A."/>
            <person name="Golightly E.J."/>
            <person name="Grandi G."/>
            <person name="Guiseppi G."/>
            <person name="Guy B.J."/>
            <person name="Haga K."/>
            <person name="Haiech J."/>
            <person name="Harwood C.R."/>
            <person name="Henaut A."/>
            <person name="Hilbert H."/>
            <person name="Holsappel S."/>
            <person name="Hosono S."/>
            <person name="Hullo M.-F."/>
            <person name="Itaya M."/>
            <person name="Jones L.-M."/>
            <person name="Joris B."/>
            <person name="Karamata D."/>
            <person name="Kasahara Y."/>
            <person name="Klaerr-Blanchard M."/>
            <person name="Klein C."/>
            <person name="Kobayashi Y."/>
            <person name="Koetter P."/>
            <person name="Koningstein G."/>
            <person name="Krogh S."/>
            <person name="Kumano M."/>
            <person name="Kurita K."/>
            <person name="Lapidus A."/>
            <person name="Lardinois S."/>
            <person name="Lauber J."/>
            <person name="Lazarevic V."/>
            <person name="Lee S.-M."/>
            <person name="Levine A."/>
            <person name="Liu H."/>
            <person name="Masuda S."/>
            <person name="Mauel C."/>
            <person name="Medigue C."/>
            <person name="Medina N."/>
            <person name="Mellado R.P."/>
            <person name="Mizuno M."/>
            <person name="Moestl D."/>
            <person name="Nakai S."/>
            <person name="Noback M."/>
            <person name="Noone D."/>
            <person name="O'Reilly M."/>
            <person name="Ogawa K."/>
            <person name="Ogiwara A."/>
            <person name="Oudega B."/>
            <person name="Park S.-H."/>
            <person name="Parro V."/>
            <person name="Pohl T.M."/>
            <person name="Portetelle D."/>
            <person name="Porwollik S."/>
            <person name="Prescott A.M."/>
            <person name="Presecan E."/>
            <person name="Pujic P."/>
            <person name="Purnelle B."/>
            <person name="Rapoport G."/>
            <person name="Rey M."/>
            <person name="Reynolds S."/>
            <person name="Rieger M."/>
            <person name="Rivolta C."/>
            <person name="Rocha E."/>
            <person name="Roche B."/>
            <person name="Rose M."/>
            <person name="Sadaie Y."/>
            <person name="Sato T."/>
            <person name="Scanlan E."/>
            <person name="Schleich S."/>
            <person name="Schroeter R."/>
            <person name="Scoffone F."/>
            <person name="Sekiguchi J."/>
            <person name="Sekowska A."/>
            <person name="Seror S.J."/>
            <person name="Serror P."/>
            <person name="Shin B.-S."/>
            <person name="Soldo B."/>
            <person name="Sorokin A."/>
            <person name="Tacconi E."/>
            <person name="Takagi T."/>
            <person name="Takahashi H."/>
            <person name="Takemaru K."/>
            <person name="Takeuchi M."/>
            <person name="Tamakoshi A."/>
            <person name="Tanaka T."/>
            <person name="Terpstra P."/>
            <person name="Tognoni A."/>
            <person name="Tosato V."/>
            <person name="Uchiyama S."/>
            <person name="Vandenbol M."/>
            <person name="Vannier F."/>
            <person name="Vassarotti A."/>
            <person name="Viari A."/>
            <person name="Wambutt R."/>
            <person name="Wedler E."/>
            <person name="Wedler H."/>
            <person name="Weitzenegger T."/>
            <person name="Winters P."/>
            <person name="Wipat A."/>
            <person name="Yamamoto H."/>
            <person name="Yamane K."/>
            <person name="Yasumoto K."/>
            <person name="Yata K."/>
            <person name="Yoshida K."/>
            <person name="Yoshikawa H.-F."/>
            <person name="Zumstein E."/>
            <person name="Yoshikawa H."/>
            <person name="Danchin A."/>
        </authorList>
    </citation>
    <scope>NUCLEOTIDE SEQUENCE [LARGE SCALE GENOMIC DNA]</scope>
    <source>
        <strain>168</strain>
    </source>
</reference>
<reference key="3">
    <citation type="journal article" date="2009" name="Microbiology">
        <title>From a consortium sequence to a unified sequence: the Bacillus subtilis 168 reference genome a decade later.</title>
        <authorList>
            <person name="Barbe V."/>
            <person name="Cruveiller S."/>
            <person name="Kunst F."/>
            <person name="Lenoble P."/>
            <person name="Meurice G."/>
            <person name="Sekowska A."/>
            <person name="Vallenet D."/>
            <person name="Wang T."/>
            <person name="Moszer I."/>
            <person name="Medigue C."/>
            <person name="Danchin A."/>
        </authorList>
    </citation>
    <scope>SEQUENCE REVISION TO C-TERMINUS</scope>
</reference>
<reference key="4">
    <citation type="journal article" date="2007" name="J. Biol. Chem.">
        <title>Organization and function of the YsiA regulon of Bacillus subtilis involved in fatty acid degradation.</title>
        <authorList>
            <person name="Matsuoka H."/>
            <person name="Hirooka K."/>
            <person name="Fujita Y."/>
        </authorList>
    </citation>
    <scope>GENE NAME</scope>
    <scope>INDUCTION</scope>
    <source>
        <strain>168</strain>
    </source>
</reference>
<organism>
    <name type="scientific">Bacillus subtilis (strain 168)</name>
    <dbReference type="NCBI Taxonomy" id="224308"/>
    <lineage>
        <taxon>Bacteria</taxon>
        <taxon>Bacillati</taxon>
        <taxon>Bacillota</taxon>
        <taxon>Bacilli</taxon>
        <taxon>Bacillales</taxon>
        <taxon>Bacillaceae</taxon>
        <taxon>Bacillus</taxon>
    </lineage>
</organism>
<proteinExistence type="evidence at transcript level"/>
<dbReference type="EMBL" id="AJ222587">
    <property type="protein sequence ID" value="CAA10870.1"/>
    <property type="status" value="ALT_SEQ"/>
    <property type="molecule type" value="Genomic_DNA"/>
</dbReference>
<dbReference type="EMBL" id="AL009126">
    <property type="protein sequence ID" value="CAX52614.1"/>
    <property type="molecule type" value="Genomic_DNA"/>
</dbReference>
<dbReference type="PIR" id="D69865">
    <property type="entry name" value="D69865"/>
</dbReference>
<dbReference type="RefSeq" id="WP_003244990.1">
    <property type="nucleotide sequence ID" value="NZ_OZ025638.1"/>
</dbReference>
<dbReference type="RefSeq" id="YP_003097723.1">
    <property type="nucleotide sequence ID" value="NC_000964.3"/>
</dbReference>
<dbReference type="SMR" id="O34320"/>
<dbReference type="FunCoup" id="O34320">
    <property type="interactions" value="9"/>
</dbReference>
<dbReference type="STRING" id="224308.BSU14071"/>
<dbReference type="PaxDb" id="224308-BSU14071"/>
<dbReference type="EnsemblBacteria" id="CAX52614">
    <property type="protein sequence ID" value="CAX52614"/>
    <property type="gene ID" value="BSU_14071"/>
</dbReference>
<dbReference type="GeneID" id="8303034"/>
<dbReference type="KEGG" id="bsu:BSU14071"/>
<dbReference type="PATRIC" id="fig|224308.179.peg.1534"/>
<dbReference type="eggNOG" id="COG3409">
    <property type="taxonomic scope" value="Bacteria"/>
</dbReference>
<dbReference type="InParanoid" id="O34320"/>
<dbReference type="OrthoDB" id="1795295at2"/>
<dbReference type="PhylomeDB" id="O34320"/>
<dbReference type="Proteomes" id="UP000001570">
    <property type="component" value="Chromosome"/>
</dbReference>
<dbReference type="CDD" id="cd06418">
    <property type="entry name" value="GH25_BacA-like"/>
    <property type="match status" value="1"/>
</dbReference>
<dbReference type="Gene3D" id="3.20.20.80">
    <property type="entry name" value="Glycosidases"/>
    <property type="match status" value="1"/>
</dbReference>
<dbReference type="Gene3D" id="1.10.101.10">
    <property type="entry name" value="PGBD-like superfamily/PGBD"/>
    <property type="match status" value="2"/>
</dbReference>
<dbReference type="InterPro" id="IPR017853">
    <property type="entry name" value="Glycoside_hydrolase_SF"/>
</dbReference>
<dbReference type="InterPro" id="IPR002477">
    <property type="entry name" value="Peptidoglycan-bd-like"/>
</dbReference>
<dbReference type="InterPro" id="IPR036365">
    <property type="entry name" value="PGBD-like_sf"/>
</dbReference>
<dbReference type="InterPro" id="IPR036366">
    <property type="entry name" value="PGBDSf"/>
</dbReference>
<dbReference type="InterPro" id="IPR015020">
    <property type="entry name" value="Rv2525c-like_Glyco_Hydro-like"/>
</dbReference>
<dbReference type="Pfam" id="PF01471">
    <property type="entry name" value="PG_binding_1"/>
    <property type="match status" value="2"/>
</dbReference>
<dbReference type="Pfam" id="PF08924">
    <property type="entry name" value="Rv2525c_GlyHyd-like"/>
    <property type="match status" value="1"/>
</dbReference>
<dbReference type="SUPFAM" id="SSF51445">
    <property type="entry name" value="(Trans)glycosidases"/>
    <property type="match status" value="1"/>
</dbReference>
<dbReference type="SUPFAM" id="SSF47090">
    <property type="entry name" value="PGBD-like"/>
    <property type="match status" value="2"/>
</dbReference>
<protein>
    <recommendedName>
        <fullName>Uncharacterized protein FadG</fullName>
    </recommendedName>
</protein>
<keyword id="KW-1185">Reference proteome</keyword>